<reference key="1">
    <citation type="journal article" date="2000" name="Arch. Biochem. Biophys.">
        <title>Phospholipase A(2) with platelet aggregation inhibitor activity from Austrelaps superbus venom: protein purification and cDNA cloning.</title>
        <authorList>
            <person name="Singh S.B."/>
            <person name="Armugam A."/>
            <person name="Kini R.M."/>
            <person name="Jeyaseelan K."/>
        </authorList>
    </citation>
    <scope>NUCLEOTIDE SEQUENCE [MRNA]</scope>
    <source>
        <tissue>Venom gland</tissue>
    </source>
</reference>
<proteinExistence type="evidence at transcript level"/>
<dbReference type="EC" id="3.1.1.4"/>
<dbReference type="EMBL" id="AF184128">
    <property type="protein sequence ID" value="AAD56551.1"/>
    <property type="molecule type" value="mRNA"/>
</dbReference>
<dbReference type="SMR" id="Q9PUI1"/>
<dbReference type="GO" id="GO:0005576">
    <property type="term" value="C:extracellular region"/>
    <property type="evidence" value="ECO:0007669"/>
    <property type="project" value="UniProtKB-SubCell"/>
</dbReference>
<dbReference type="GO" id="GO:0005509">
    <property type="term" value="F:calcium ion binding"/>
    <property type="evidence" value="ECO:0007669"/>
    <property type="project" value="InterPro"/>
</dbReference>
<dbReference type="GO" id="GO:0047498">
    <property type="term" value="F:calcium-dependent phospholipase A2 activity"/>
    <property type="evidence" value="ECO:0007669"/>
    <property type="project" value="TreeGrafter"/>
</dbReference>
<dbReference type="GO" id="GO:0005543">
    <property type="term" value="F:phospholipid binding"/>
    <property type="evidence" value="ECO:0007669"/>
    <property type="project" value="TreeGrafter"/>
</dbReference>
<dbReference type="GO" id="GO:0090729">
    <property type="term" value="F:toxin activity"/>
    <property type="evidence" value="ECO:0007669"/>
    <property type="project" value="UniProtKB-KW"/>
</dbReference>
<dbReference type="GO" id="GO:0050482">
    <property type="term" value="P:arachidonate secretion"/>
    <property type="evidence" value="ECO:0007669"/>
    <property type="project" value="InterPro"/>
</dbReference>
<dbReference type="GO" id="GO:0016042">
    <property type="term" value="P:lipid catabolic process"/>
    <property type="evidence" value="ECO:0007669"/>
    <property type="project" value="UniProtKB-KW"/>
</dbReference>
<dbReference type="GO" id="GO:0006644">
    <property type="term" value="P:phospholipid metabolic process"/>
    <property type="evidence" value="ECO:0007669"/>
    <property type="project" value="InterPro"/>
</dbReference>
<dbReference type="CDD" id="cd00125">
    <property type="entry name" value="PLA2c"/>
    <property type="match status" value="1"/>
</dbReference>
<dbReference type="FunFam" id="1.20.90.10:FF:000007">
    <property type="entry name" value="Acidic phospholipase A2"/>
    <property type="match status" value="1"/>
</dbReference>
<dbReference type="Gene3D" id="1.20.90.10">
    <property type="entry name" value="Phospholipase A2 domain"/>
    <property type="match status" value="1"/>
</dbReference>
<dbReference type="InterPro" id="IPR001211">
    <property type="entry name" value="PLipase_A2"/>
</dbReference>
<dbReference type="InterPro" id="IPR033112">
    <property type="entry name" value="PLipase_A2_Asp_AS"/>
</dbReference>
<dbReference type="InterPro" id="IPR016090">
    <property type="entry name" value="PLipase_A2_dom"/>
</dbReference>
<dbReference type="InterPro" id="IPR036444">
    <property type="entry name" value="PLipase_A2_dom_sf"/>
</dbReference>
<dbReference type="InterPro" id="IPR033113">
    <property type="entry name" value="PLipase_A2_His_AS"/>
</dbReference>
<dbReference type="PANTHER" id="PTHR11716:SF51">
    <property type="entry name" value="PHOSPHOLIPASE A2"/>
    <property type="match status" value="1"/>
</dbReference>
<dbReference type="PANTHER" id="PTHR11716">
    <property type="entry name" value="PHOSPHOLIPASE A2 FAMILY MEMBER"/>
    <property type="match status" value="1"/>
</dbReference>
<dbReference type="Pfam" id="PF00068">
    <property type="entry name" value="Phospholip_A2_1"/>
    <property type="match status" value="1"/>
</dbReference>
<dbReference type="PRINTS" id="PR00389">
    <property type="entry name" value="PHPHLIPASEA2"/>
</dbReference>
<dbReference type="SMART" id="SM00085">
    <property type="entry name" value="PA2c"/>
    <property type="match status" value="1"/>
</dbReference>
<dbReference type="SUPFAM" id="SSF48619">
    <property type="entry name" value="Phospholipase A2, PLA2"/>
    <property type="match status" value="1"/>
</dbReference>
<dbReference type="PROSITE" id="PS00119">
    <property type="entry name" value="PA2_ASP"/>
    <property type="match status" value="1"/>
</dbReference>
<dbReference type="PROSITE" id="PS00118">
    <property type="entry name" value="PA2_HIS"/>
    <property type="match status" value="1"/>
</dbReference>
<evidence type="ECO:0000250" key="1"/>
<evidence type="ECO:0000255" key="2"/>
<evidence type="ECO:0000255" key="3">
    <source>
        <dbReference type="PROSITE-ProRule" id="PRU10035"/>
    </source>
</evidence>
<evidence type="ECO:0000255" key="4">
    <source>
        <dbReference type="PROSITE-ProRule" id="PRU10036"/>
    </source>
</evidence>
<evidence type="ECO:0000305" key="5"/>
<organism>
    <name type="scientific">Austrelaps superbus</name>
    <name type="common">Lowland copperhead snake</name>
    <name type="synonym">Hoplocephalus superbus</name>
    <dbReference type="NCBI Taxonomy" id="29156"/>
    <lineage>
        <taxon>Eukaryota</taxon>
        <taxon>Metazoa</taxon>
        <taxon>Chordata</taxon>
        <taxon>Craniata</taxon>
        <taxon>Vertebrata</taxon>
        <taxon>Euteleostomi</taxon>
        <taxon>Lepidosauria</taxon>
        <taxon>Squamata</taxon>
        <taxon>Bifurcata</taxon>
        <taxon>Unidentata</taxon>
        <taxon>Episquamata</taxon>
        <taxon>Toxicofera</taxon>
        <taxon>Serpentes</taxon>
        <taxon>Colubroidea</taxon>
        <taxon>Elapidae</taxon>
        <taxon>Hydrophiinae</taxon>
        <taxon>Austrelaps</taxon>
    </lineage>
</organism>
<protein>
    <recommendedName>
        <fullName>Basic phospholipase A2 S6-45</fullName>
        <shortName>svPLA2</shortName>
        <ecNumber>3.1.1.4</ecNumber>
    </recommendedName>
    <alternativeName>
        <fullName>ASPLA2</fullName>
    </alternativeName>
    <alternativeName>
        <fullName>Phosphatidylcholine 2-acylhydrolase</fullName>
    </alternativeName>
</protein>
<accession>Q9PUI1</accession>
<sequence>MYPAHLLVLLAVCVSLLGASDIPPQPLNLVQFSSMIQCANHGRRPTSNYMDYGCYCGKGGSGTPVDELDRCCKIHDDCYGEAEKSQKCAPYWTWYTWKCGSDGPQCDDSKTGCQRFVCDCDATAAKCFAKAPYNKENYNIKTRCQ</sequence>
<feature type="signal peptide" evidence="2">
    <location>
        <begin position="1"/>
        <end position="19"/>
    </location>
</feature>
<feature type="propeptide" id="PRO_0000022787" evidence="2">
    <location>
        <begin position="20"/>
        <end position="27"/>
    </location>
</feature>
<feature type="chain" id="PRO_0000022788" description="Basic phospholipase A2 S6-45">
    <location>
        <begin position="28"/>
        <end position="145"/>
    </location>
</feature>
<feature type="active site" evidence="1">
    <location>
        <position position="75"/>
    </location>
</feature>
<feature type="active site" evidence="1">
    <location>
        <position position="121"/>
    </location>
</feature>
<feature type="binding site" evidence="1">
    <location>
        <position position="55"/>
    </location>
    <ligand>
        <name>Ca(2+)</name>
        <dbReference type="ChEBI" id="CHEBI:29108"/>
    </ligand>
</feature>
<feature type="binding site" evidence="1">
    <location>
        <position position="57"/>
    </location>
    <ligand>
        <name>Ca(2+)</name>
        <dbReference type="ChEBI" id="CHEBI:29108"/>
    </ligand>
</feature>
<feature type="binding site" evidence="1">
    <location>
        <position position="59"/>
    </location>
    <ligand>
        <name>Ca(2+)</name>
        <dbReference type="ChEBI" id="CHEBI:29108"/>
    </ligand>
</feature>
<feature type="binding site" evidence="1">
    <location>
        <position position="76"/>
    </location>
    <ligand>
        <name>Ca(2+)</name>
        <dbReference type="ChEBI" id="CHEBI:29108"/>
    </ligand>
</feature>
<feature type="disulfide bond" evidence="1">
    <location>
        <begin position="38"/>
        <end position="99"/>
    </location>
</feature>
<feature type="disulfide bond" evidence="1">
    <location>
        <begin position="54"/>
        <end position="144"/>
    </location>
</feature>
<feature type="disulfide bond" evidence="1">
    <location>
        <begin position="56"/>
        <end position="72"/>
    </location>
</feature>
<feature type="disulfide bond" evidence="1">
    <location>
        <begin position="71"/>
        <end position="127"/>
    </location>
</feature>
<feature type="disulfide bond" evidence="1">
    <location>
        <begin position="78"/>
        <end position="120"/>
    </location>
</feature>
<feature type="disulfide bond" evidence="1">
    <location>
        <begin position="88"/>
        <end position="113"/>
    </location>
</feature>
<feature type="disulfide bond" evidence="1">
    <location>
        <begin position="106"/>
        <end position="118"/>
    </location>
</feature>
<keyword id="KW-0106">Calcium</keyword>
<keyword id="KW-1015">Disulfide bond</keyword>
<keyword id="KW-1199">Hemostasis impairing toxin</keyword>
<keyword id="KW-0378">Hydrolase</keyword>
<keyword id="KW-0442">Lipid degradation</keyword>
<keyword id="KW-0443">Lipid metabolism</keyword>
<keyword id="KW-0479">Metal-binding</keyword>
<keyword id="KW-1201">Platelet aggregation inhibiting toxin</keyword>
<keyword id="KW-0964">Secreted</keyword>
<keyword id="KW-0732">Signal</keyword>
<keyword id="KW-0800">Toxin</keyword>
<comment type="function">
    <text evidence="1">Snake venom phospholipase A2 (PLA2) that inhibits collagen-induced platelet aggregation. PLA2 catalyzes the calcium-dependent hydrolysis of the 2-acyl groups in 3-sn-phosphoglycerides (By similarity).</text>
</comment>
<comment type="catalytic activity">
    <reaction evidence="3 4">
        <text>a 1,2-diacyl-sn-glycero-3-phosphocholine + H2O = a 1-acyl-sn-glycero-3-phosphocholine + a fatty acid + H(+)</text>
        <dbReference type="Rhea" id="RHEA:15801"/>
        <dbReference type="ChEBI" id="CHEBI:15377"/>
        <dbReference type="ChEBI" id="CHEBI:15378"/>
        <dbReference type="ChEBI" id="CHEBI:28868"/>
        <dbReference type="ChEBI" id="CHEBI:57643"/>
        <dbReference type="ChEBI" id="CHEBI:58168"/>
        <dbReference type="EC" id="3.1.1.4"/>
    </reaction>
</comment>
<comment type="cofactor">
    <cofactor evidence="1">
        <name>Ca(2+)</name>
        <dbReference type="ChEBI" id="CHEBI:29108"/>
    </cofactor>
    <text evidence="1">Binds 1 Ca(2+) ion.</text>
</comment>
<comment type="subcellular location">
    <subcellularLocation>
        <location evidence="1">Secreted</location>
    </subcellularLocation>
</comment>
<comment type="tissue specificity">
    <text>Expressed by the venom gland.</text>
</comment>
<comment type="similarity">
    <text evidence="5">Belongs to the phospholipase A2 family. Group I subfamily. D49 sub-subfamily.</text>
</comment>
<name>PA2B2_AUSSU</name>